<dbReference type="EMBL" id="L11740">
    <property type="status" value="NOT_ANNOTATED_CDS"/>
    <property type="molecule type" value="mRNA"/>
</dbReference>
<dbReference type="SMR" id="P34824"/>
<dbReference type="ExpressionAtlas" id="P34824">
    <property type="expression patterns" value="baseline and differential"/>
</dbReference>
<dbReference type="GO" id="GO:0005737">
    <property type="term" value="C:cytoplasm"/>
    <property type="evidence" value="ECO:0007669"/>
    <property type="project" value="UniProtKB-SubCell"/>
</dbReference>
<dbReference type="GO" id="GO:0005525">
    <property type="term" value="F:GTP binding"/>
    <property type="evidence" value="ECO:0007669"/>
    <property type="project" value="UniProtKB-KW"/>
</dbReference>
<dbReference type="GO" id="GO:0003924">
    <property type="term" value="F:GTPase activity"/>
    <property type="evidence" value="ECO:0007669"/>
    <property type="project" value="InterPro"/>
</dbReference>
<dbReference type="GO" id="GO:0003746">
    <property type="term" value="F:translation elongation factor activity"/>
    <property type="evidence" value="ECO:0007669"/>
    <property type="project" value="UniProtKB-KW"/>
</dbReference>
<dbReference type="CDD" id="cd01883">
    <property type="entry name" value="EF1_alpha"/>
    <property type="match status" value="1"/>
</dbReference>
<dbReference type="CDD" id="cd03693">
    <property type="entry name" value="EF1_alpha_II"/>
    <property type="match status" value="1"/>
</dbReference>
<dbReference type="CDD" id="cd03705">
    <property type="entry name" value="EF1_alpha_III"/>
    <property type="match status" value="1"/>
</dbReference>
<dbReference type="FunFam" id="2.40.30.10:FF:000003">
    <property type="entry name" value="Elongation factor 1-alpha"/>
    <property type="match status" value="1"/>
</dbReference>
<dbReference type="FunFam" id="2.40.30.10:FF:000005">
    <property type="entry name" value="Elongation factor 1-alpha"/>
    <property type="match status" value="1"/>
</dbReference>
<dbReference type="FunFam" id="3.40.50.300:FF:000255">
    <property type="entry name" value="Elongation factor 1-alpha"/>
    <property type="match status" value="1"/>
</dbReference>
<dbReference type="Gene3D" id="3.40.50.300">
    <property type="entry name" value="P-loop containing nucleotide triphosphate hydrolases"/>
    <property type="match status" value="1"/>
</dbReference>
<dbReference type="Gene3D" id="2.40.30.10">
    <property type="entry name" value="Translation factors"/>
    <property type="match status" value="2"/>
</dbReference>
<dbReference type="HAMAP" id="MF_00118_A">
    <property type="entry name" value="EF_Tu_A"/>
    <property type="match status" value="1"/>
</dbReference>
<dbReference type="InterPro" id="IPR004161">
    <property type="entry name" value="EFTu-like_2"/>
</dbReference>
<dbReference type="InterPro" id="IPR031157">
    <property type="entry name" value="G_TR_CS"/>
</dbReference>
<dbReference type="InterPro" id="IPR054696">
    <property type="entry name" value="GTP-eEF1A_C"/>
</dbReference>
<dbReference type="InterPro" id="IPR027417">
    <property type="entry name" value="P-loop_NTPase"/>
</dbReference>
<dbReference type="InterPro" id="IPR000795">
    <property type="entry name" value="T_Tr_GTP-bd_dom"/>
</dbReference>
<dbReference type="InterPro" id="IPR050100">
    <property type="entry name" value="TRAFAC_GTPase_members"/>
</dbReference>
<dbReference type="InterPro" id="IPR009000">
    <property type="entry name" value="Transl_B-barrel_sf"/>
</dbReference>
<dbReference type="InterPro" id="IPR009001">
    <property type="entry name" value="Transl_elong_EF1A/Init_IF2_C"/>
</dbReference>
<dbReference type="InterPro" id="IPR004539">
    <property type="entry name" value="Transl_elong_EF1A_euk/arc"/>
</dbReference>
<dbReference type="NCBIfam" id="TIGR00483">
    <property type="entry name" value="EF-1_alpha"/>
    <property type="match status" value="1"/>
</dbReference>
<dbReference type="NCBIfam" id="NF008969">
    <property type="entry name" value="PRK12317.1"/>
    <property type="match status" value="1"/>
</dbReference>
<dbReference type="PANTHER" id="PTHR23115">
    <property type="entry name" value="TRANSLATION FACTOR"/>
    <property type="match status" value="1"/>
</dbReference>
<dbReference type="Pfam" id="PF22594">
    <property type="entry name" value="GTP-eEF1A_C"/>
    <property type="match status" value="1"/>
</dbReference>
<dbReference type="Pfam" id="PF00009">
    <property type="entry name" value="GTP_EFTU"/>
    <property type="match status" value="1"/>
</dbReference>
<dbReference type="Pfam" id="PF03144">
    <property type="entry name" value="GTP_EFTU_D2"/>
    <property type="match status" value="1"/>
</dbReference>
<dbReference type="PRINTS" id="PR00315">
    <property type="entry name" value="ELONGATNFCT"/>
</dbReference>
<dbReference type="SUPFAM" id="SSF50465">
    <property type="entry name" value="EF-Tu/eEF-1alpha/eIF2-gamma C-terminal domain"/>
    <property type="match status" value="1"/>
</dbReference>
<dbReference type="SUPFAM" id="SSF52540">
    <property type="entry name" value="P-loop containing nucleoside triphosphate hydrolases"/>
    <property type="match status" value="1"/>
</dbReference>
<dbReference type="SUPFAM" id="SSF50447">
    <property type="entry name" value="Translation proteins"/>
    <property type="match status" value="1"/>
</dbReference>
<dbReference type="PROSITE" id="PS00301">
    <property type="entry name" value="G_TR_1"/>
    <property type="match status" value="1"/>
</dbReference>
<dbReference type="PROSITE" id="PS51722">
    <property type="entry name" value="G_TR_2"/>
    <property type="match status" value="1"/>
</dbReference>
<protein>
    <recommendedName>
        <fullName>Elongation factor 1-alpha</fullName>
        <shortName>EF-1-alpha</shortName>
    </recommendedName>
</protein>
<evidence type="ECO:0000250" key="1"/>
<evidence type="ECO:0000250" key="2">
    <source>
        <dbReference type="UniProtKB" id="Q8GTY0"/>
    </source>
</evidence>
<evidence type="ECO:0000305" key="3"/>
<sequence>MGKEKIHISIVVIGHVDSGKSTTTGHLIYKLGGIDKRVIERFEKEAAEMNKRSFKYAWVLDKLKAERERGITIDIALWKFETTKYSCTVIDAPGHRDFIKNMITGTSQADCAVLIIDSTTGVFQAGISKDGQTREHALLAFTLGVKQMICCCNKMDATTPKYSKSRYDEIVKEVSSYLKKVGYNPDKVPFVPISGFEGDNMIERSSNLDWYKGPTLLEALDQINEPKRPSDKPLHLPLQDVYKIGGIGTVPVGRVETGVIKPGMVVTFGPTGLTTEVKSVEVHHESLLEALPGDNVGFNVKNVAVKDLKRGYVASNSKDDPAKEAANFTAQVIIMNHPGQISNGYAPVLDCHTSHIAVKFAEIQTKIDRRSGKELEAAPKFLKNGDAGFVKMIPTKPMVVETFAQYPPLGRFAVRDMRQTVAVGVIKSVEKKEPTGAKVTKAAIKKK</sequence>
<reference key="1">
    <citation type="journal article" date="1994" name="Plant Physiol.">
        <title>Nucleotide sequence of a cDNA encoding an elongation factor (EF-1 alpha) from barley primary leaf.</title>
        <authorList>
            <person name="Sutton F."/>
            <person name="Kenefick D.G."/>
        </authorList>
    </citation>
    <scope>NUCLEOTIDE SEQUENCE [MRNA]</scope>
    <source>
        <tissue>Leaf</tissue>
    </source>
</reference>
<reference key="2">
    <citation type="journal article" date="2000" name="Electrophoresis">
        <title>Separation and characterization of basic barley seed proteins.</title>
        <authorList>
            <person name="Kristoffersen H.E."/>
            <person name="Flengsrud R."/>
        </authorList>
    </citation>
    <scope>PROTEIN SEQUENCE OF 155-161; 201-205 AND 335-341</scope>
    <source>
        <strain>cv. Bomi</strain>
        <tissue>Starchy endosperm</tissue>
    </source>
</reference>
<proteinExistence type="evidence at protein level"/>
<name>EF1A1_HORVU</name>
<keyword id="KW-0963">Cytoplasm</keyword>
<keyword id="KW-0903">Direct protein sequencing</keyword>
<keyword id="KW-0251">Elongation factor</keyword>
<keyword id="KW-0342">GTP-binding</keyword>
<keyword id="KW-0488">Methylation</keyword>
<keyword id="KW-0547">Nucleotide-binding</keyword>
<keyword id="KW-0597">Phosphoprotein</keyword>
<keyword id="KW-0648">Protein biosynthesis</keyword>
<organism>
    <name type="scientific">Hordeum vulgare</name>
    <name type="common">Barley</name>
    <dbReference type="NCBI Taxonomy" id="4513"/>
    <lineage>
        <taxon>Eukaryota</taxon>
        <taxon>Viridiplantae</taxon>
        <taxon>Streptophyta</taxon>
        <taxon>Embryophyta</taxon>
        <taxon>Tracheophyta</taxon>
        <taxon>Spermatophyta</taxon>
        <taxon>Magnoliopsida</taxon>
        <taxon>Liliopsida</taxon>
        <taxon>Poales</taxon>
        <taxon>Poaceae</taxon>
        <taxon>BOP clade</taxon>
        <taxon>Pooideae</taxon>
        <taxon>Triticodae</taxon>
        <taxon>Triticeae</taxon>
        <taxon>Hordeinae</taxon>
        <taxon>Hordeum</taxon>
    </lineage>
</organism>
<comment type="function">
    <text>This protein promotes the GTP-dependent binding of aminoacyl-tRNA to the A-site of ribosomes during protein biosynthesis.</text>
</comment>
<comment type="subcellular location">
    <subcellularLocation>
        <location>Cytoplasm</location>
    </subcellularLocation>
</comment>
<comment type="similarity">
    <text evidence="3">Belongs to the TRAFAC class translation factor GTPase superfamily. Classic translation factor GTPase family. EF-Tu/EF-1A subfamily.</text>
</comment>
<feature type="chain" id="PRO_0000090936" description="Elongation factor 1-alpha">
    <location>
        <begin position="1"/>
        <end position="447"/>
    </location>
</feature>
<feature type="domain" description="tr-type G">
    <location>
        <begin position="5"/>
        <end position="230"/>
    </location>
</feature>
<feature type="region of interest" description="G1" evidence="1">
    <location>
        <begin position="14"/>
        <end position="21"/>
    </location>
</feature>
<feature type="region of interest" description="G2" evidence="1">
    <location>
        <begin position="70"/>
        <end position="74"/>
    </location>
</feature>
<feature type="region of interest" description="G3" evidence="1">
    <location>
        <begin position="91"/>
        <end position="94"/>
    </location>
</feature>
<feature type="region of interest" description="G4" evidence="1">
    <location>
        <begin position="153"/>
        <end position="156"/>
    </location>
</feature>
<feature type="region of interest" description="G5" evidence="1">
    <location>
        <begin position="194"/>
        <end position="196"/>
    </location>
</feature>
<feature type="binding site" evidence="1">
    <location>
        <begin position="14"/>
        <end position="21"/>
    </location>
    <ligand>
        <name>GTP</name>
        <dbReference type="ChEBI" id="CHEBI:37565"/>
    </ligand>
</feature>
<feature type="binding site" evidence="1">
    <location>
        <begin position="91"/>
        <end position="95"/>
    </location>
    <ligand>
        <name>GTP</name>
        <dbReference type="ChEBI" id="CHEBI:37565"/>
    </ligand>
</feature>
<feature type="binding site" evidence="1">
    <location>
        <begin position="153"/>
        <end position="156"/>
    </location>
    <ligand>
        <name>GTP</name>
        <dbReference type="ChEBI" id="CHEBI:37565"/>
    </ligand>
</feature>
<feature type="modified residue" description="N6,N6-dimethyllysine" evidence="2">
    <location>
        <position position="55"/>
    </location>
</feature>
<feature type="modified residue" description="N6,N6,N6-trimethyllysine" evidence="2">
    <location>
        <position position="79"/>
    </location>
</feature>
<feature type="modified residue" description="N6,N6,N6-trimethyllysine" evidence="2">
    <location>
        <position position="187"/>
    </location>
</feature>
<feature type="modified residue" description="N6-methyllysine" evidence="2">
    <location>
        <position position="261"/>
    </location>
</feature>
<feature type="modified residue" description="5-glutamyl glycerylphosphorylethanolamine" evidence="1">
    <location>
        <position position="289"/>
    </location>
</feature>
<feature type="modified residue" description="N6,N6,N6-trimethyllysine" evidence="2">
    <location>
        <position position="306"/>
    </location>
</feature>
<feature type="modified residue" description="5-glutamyl glycerylphosphorylethanolamine" evidence="1">
    <location>
        <position position="362"/>
    </location>
</feature>
<feature type="modified residue" description="N6,N6,N6-trimethyllysine" evidence="2">
    <location>
        <position position="396"/>
    </location>
</feature>
<accession>P34824</accession>